<organism>
    <name type="scientific">Hydrogenovibrio crunogenus (strain DSM 25203 / XCL-2)</name>
    <name type="common">Thiomicrospira crunogena</name>
    <dbReference type="NCBI Taxonomy" id="317025"/>
    <lineage>
        <taxon>Bacteria</taxon>
        <taxon>Pseudomonadati</taxon>
        <taxon>Pseudomonadota</taxon>
        <taxon>Gammaproteobacteria</taxon>
        <taxon>Thiotrichales</taxon>
        <taxon>Piscirickettsiaceae</taxon>
        <taxon>Hydrogenovibrio</taxon>
    </lineage>
</organism>
<feature type="chain" id="PRO_1000203597" description="Lipoprotein signal peptidase">
    <location>
        <begin position="1"/>
        <end position="172"/>
    </location>
</feature>
<feature type="transmembrane region" description="Helical" evidence="1">
    <location>
        <begin position="4"/>
        <end position="24"/>
    </location>
</feature>
<feature type="transmembrane region" description="Helical" evidence="1">
    <location>
        <begin position="39"/>
        <end position="59"/>
    </location>
</feature>
<feature type="transmembrane region" description="Helical" evidence="1">
    <location>
        <begin position="69"/>
        <end position="89"/>
    </location>
</feature>
<feature type="transmembrane region" description="Helical" evidence="1">
    <location>
        <begin position="93"/>
        <end position="113"/>
    </location>
</feature>
<feature type="transmembrane region" description="Helical" evidence="1">
    <location>
        <begin position="136"/>
        <end position="156"/>
    </location>
</feature>
<feature type="active site" evidence="1">
    <location>
        <position position="122"/>
    </location>
</feature>
<feature type="active site" evidence="1">
    <location>
        <position position="140"/>
    </location>
</feature>
<gene>
    <name evidence="1" type="primary">lspA</name>
    <name type="ordered locus">Tcr_0496</name>
</gene>
<name>LSPA_HYDCU</name>
<reference key="1">
    <citation type="journal article" date="2006" name="PLoS Biol.">
        <title>The genome of deep-sea vent chemolithoautotroph Thiomicrospira crunogena XCL-2.</title>
        <authorList>
            <person name="Scott K.M."/>
            <person name="Sievert S.M."/>
            <person name="Abril F.N."/>
            <person name="Ball L.A."/>
            <person name="Barrett C.J."/>
            <person name="Blake R.A."/>
            <person name="Boller A.J."/>
            <person name="Chain P.S.G."/>
            <person name="Clark J.A."/>
            <person name="Davis C.R."/>
            <person name="Detter C."/>
            <person name="Do K.F."/>
            <person name="Dobrinski K.P."/>
            <person name="Faza B.I."/>
            <person name="Fitzpatrick K.A."/>
            <person name="Freyermuth S.K."/>
            <person name="Harmer T.L."/>
            <person name="Hauser L.J."/>
            <person name="Huegler M."/>
            <person name="Kerfeld C.A."/>
            <person name="Klotz M.G."/>
            <person name="Kong W.W."/>
            <person name="Land M."/>
            <person name="Lapidus A."/>
            <person name="Larimer F.W."/>
            <person name="Longo D.L."/>
            <person name="Lucas S."/>
            <person name="Malfatti S.A."/>
            <person name="Massey S.E."/>
            <person name="Martin D.D."/>
            <person name="McCuddin Z."/>
            <person name="Meyer F."/>
            <person name="Moore J.L."/>
            <person name="Ocampo L.H. Jr."/>
            <person name="Paul J.H."/>
            <person name="Paulsen I.T."/>
            <person name="Reep D.K."/>
            <person name="Ren Q."/>
            <person name="Ross R.L."/>
            <person name="Sato P.Y."/>
            <person name="Thomas P."/>
            <person name="Tinkham L.E."/>
            <person name="Zeruth G.T."/>
        </authorList>
    </citation>
    <scope>NUCLEOTIDE SEQUENCE [LARGE SCALE GENOMIC DNA]</scope>
    <source>
        <strain>DSM 25203 / XCL-2</strain>
    </source>
</reference>
<sequence length="172" mass="19129">MNKLSSSAITTTWLAMIIIVLDQVTKYWANTSLTMGEPVAILPHLNLTLVYNYGAAFSFLSEVGGWQRWFFTALALVVGTALVIWLAKLPKRWTLEVVAINLVLSGAIGNVIDRILAGRVTDFVDFYIGSWHYATFNVADMGISIGAVLLIISEFWLKPRHEKKAHSTEESV</sequence>
<evidence type="ECO:0000255" key="1">
    <source>
        <dbReference type="HAMAP-Rule" id="MF_00161"/>
    </source>
</evidence>
<proteinExistence type="inferred from homology"/>
<dbReference type="EC" id="3.4.23.36" evidence="1"/>
<dbReference type="EMBL" id="CP000109">
    <property type="protein sequence ID" value="ABB41092.1"/>
    <property type="molecule type" value="Genomic_DNA"/>
</dbReference>
<dbReference type="SMR" id="Q31ID1"/>
<dbReference type="STRING" id="317025.Tcr_0496"/>
<dbReference type="KEGG" id="tcx:Tcr_0496"/>
<dbReference type="eggNOG" id="COG0597">
    <property type="taxonomic scope" value="Bacteria"/>
</dbReference>
<dbReference type="HOGENOM" id="CLU_083252_4_0_6"/>
<dbReference type="OrthoDB" id="9810259at2"/>
<dbReference type="UniPathway" id="UPA00665"/>
<dbReference type="GO" id="GO:0005886">
    <property type="term" value="C:plasma membrane"/>
    <property type="evidence" value="ECO:0007669"/>
    <property type="project" value="UniProtKB-SubCell"/>
</dbReference>
<dbReference type="GO" id="GO:0004190">
    <property type="term" value="F:aspartic-type endopeptidase activity"/>
    <property type="evidence" value="ECO:0007669"/>
    <property type="project" value="UniProtKB-UniRule"/>
</dbReference>
<dbReference type="GO" id="GO:0006508">
    <property type="term" value="P:proteolysis"/>
    <property type="evidence" value="ECO:0007669"/>
    <property type="project" value="UniProtKB-KW"/>
</dbReference>
<dbReference type="HAMAP" id="MF_00161">
    <property type="entry name" value="LspA"/>
    <property type="match status" value="1"/>
</dbReference>
<dbReference type="InterPro" id="IPR001872">
    <property type="entry name" value="Peptidase_A8"/>
</dbReference>
<dbReference type="NCBIfam" id="TIGR00077">
    <property type="entry name" value="lspA"/>
    <property type="match status" value="1"/>
</dbReference>
<dbReference type="PANTHER" id="PTHR33695">
    <property type="entry name" value="LIPOPROTEIN SIGNAL PEPTIDASE"/>
    <property type="match status" value="1"/>
</dbReference>
<dbReference type="PANTHER" id="PTHR33695:SF1">
    <property type="entry name" value="LIPOPROTEIN SIGNAL PEPTIDASE"/>
    <property type="match status" value="1"/>
</dbReference>
<dbReference type="Pfam" id="PF01252">
    <property type="entry name" value="Peptidase_A8"/>
    <property type="match status" value="1"/>
</dbReference>
<dbReference type="PRINTS" id="PR00781">
    <property type="entry name" value="LIPOSIGPTASE"/>
</dbReference>
<dbReference type="PROSITE" id="PS00855">
    <property type="entry name" value="SPASE_II"/>
    <property type="match status" value="1"/>
</dbReference>
<keyword id="KW-0064">Aspartyl protease</keyword>
<keyword id="KW-0997">Cell inner membrane</keyword>
<keyword id="KW-1003">Cell membrane</keyword>
<keyword id="KW-0378">Hydrolase</keyword>
<keyword id="KW-0472">Membrane</keyword>
<keyword id="KW-0645">Protease</keyword>
<keyword id="KW-0812">Transmembrane</keyword>
<keyword id="KW-1133">Transmembrane helix</keyword>
<accession>Q31ID1</accession>
<comment type="function">
    <text evidence="1">This protein specifically catalyzes the removal of signal peptides from prolipoproteins.</text>
</comment>
<comment type="catalytic activity">
    <reaction evidence="1">
        <text>Release of signal peptides from bacterial membrane prolipoproteins. Hydrolyzes -Xaa-Yaa-Zaa-|-(S,diacylglyceryl)Cys-, in which Xaa is hydrophobic (preferably Leu), and Yaa (Ala or Ser) and Zaa (Gly or Ala) have small, neutral side chains.</text>
        <dbReference type="EC" id="3.4.23.36"/>
    </reaction>
</comment>
<comment type="pathway">
    <text evidence="1">Protein modification; lipoprotein biosynthesis (signal peptide cleavage).</text>
</comment>
<comment type="subcellular location">
    <subcellularLocation>
        <location evidence="1">Cell inner membrane</location>
        <topology evidence="1">Multi-pass membrane protein</topology>
    </subcellularLocation>
</comment>
<comment type="similarity">
    <text evidence="1">Belongs to the peptidase A8 family.</text>
</comment>
<protein>
    <recommendedName>
        <fullName evidence="1">Lipoprotein signal peptidase</fullName>
        <ecNumber evidence="1">3.4.23.36</ecNumber>
    </recommendedName>
    <alternativeName>
        <fullName evidence="1">Prolipoprotein signal peptidase</fullName>
    </alternativeName>
    <alternativeName>
        <fullName evidence="1">Signal peptidase II</fullName>
        <shortName evidence="1">SPase II</shortName>
    </alternativeName>
</protein>